<organism>
    <name type="scientific">Hyperthermus butylicus (strain DSM 5456 / JCM 9403 / PLM1-5)</name>
    <dbReference type="NCBI Taxonomy" id="415426"/>
    <lineage>
        <taxon>Archaea</taxon>
        <taxon>Thermoproteota</taxon>
        <taxon>Thermoprotei</taxon>
        <taxon>Desulfurococcales</taxon>
        <taxon>Pyrodictiaceae</taxon>
        <taxon>Hyperthermus</taxon>
    </lineage>
</organism>
<accession>A2BKX7</accession>
<keyword id="KW-0066">ATP synthesis</keyword>
<keyword id="KW-1003">Cell membrane</keyword>
<keyword id="KW-0375">Hydrogen ion transport</keyword>
<keyword id="KW-0406">Ion transport</keyword>
<keyword id="KW-0472">Membrane</keyword>
<keyword id="KW-1185">Reference proteome</keyword>
<keyword id="KW-0813">Transport</keyword>
<reference key="1">
    <citation type="journal article" date="2007" name="Archaea">
        <title>The genome of Hyperthermus butylicus: a sulfur-reducing, peptide fermenting, neutrophilic Crenarchaeote growing up to 108 degrees C.</title>
        <authorList>
            <person name="Bruegger K."/>
            <person name="Chen L."/>
            <person name="Stark M."/>
            <person name="Zibat A."/>
            <person name="Redder P."/>
            <person name="Ruepp A."/>
            <person name="Awayez M."/>
            <person name="She Q."/>
            <person name="Garrett R.A."/>
            <person name="Klenk H.-P."/>
        </authorList>
    </citation>
    <scope>NUCLEOTIDE SEQUENCE [LARGE SCALE GENOMIC DNA]</scope>
    <source>
        <strain>DSM 5456 / JCM 9403 / PLM1-5</strain>
    </source>
</reference>
<gene>
    <name evidence="1" type="primary">atpE</name>
    <name type="ordered locus">Hbut_0785</name>
</gene>
<proteinExistence type="inferred from homology"/>
<comment type="function">
    <text evidence="1">Component of the A-type ATP synthase that produces ATP from ADP in the presence of a proton gradient across the membrane.</text>
</comment>
<comment type="subunit">
    <text evidence="1">Has multiple subunits with at least A(3), B(3), C, D, E, F, H, I and proteolipid K(x).</text>
</comment>
<comment type="subcellular location">
    <subcellularLocation>
        <location evidence="1">Cell membrane</location>
        <topology evidence="1">Peripheral membrane protein</topology>
    </subcellularLocation>
</comment>
<comment type="similarity">
    <text evidence="1">Belongs to the V-ATPase E subunit family.</text>
</comment>
<feature type="chain" id="PRO_0000322527" description="A-type ATP synthase subunit E">
    <location>
        <begin position="1"/>
        <end position="207"/>
    </location>
</feature>
<protein>
    <recommendedName>
        <fullName evidence="1">A-type ATP synthase subunit E</fullName>
    </recommendedName>
</protein>
<sequence>MTSSVRIVGDPSRFAEQLVSSIAEHVESRVREALEAARKIVERAYEESASKLESELRRALREAEEQVQAYTAKREVELRKRLAEIRAKAVEEIMSVALQRLREYVGLEAYKEFIKRLLDSALETASRRSRRVIVHPARPDQAIVAELAPRVAAEKGIEVEVGEAVEGAGGFTVRAVEAGLTLDYRLEVILAPALEEARARVLEVLNQ</sequence>
<name>AATE_HYPBU</name>
<evidence type="ECO:0000255" key="1">
    <source>
        <dbReference type="HAMAP-Rule" id="MF_00311"/>
    </source>
</evidence>
<dbReference type="EMBL" id="CP000493">
    <property type="protein sequence ID" value="ABM80638.1"/>
    <property type="molecule type" value="Genomic_DNA"/>
</dbReference>
<dbReference type="RefSeq" id="WP_011821956.1">
    <property type="nucleotide sequence ID" value="NC_008818.1"/>
</dbReference>
<dbReference type="SMR" id="A2BKX7"/>
<dbReference type="STRING" id="415426.Hbut_0785"/>
<dbReference type="EnsemblBacteria" id="ABM80638">
    <property type="protein sequence ID" value="ABM80638"/>
    <property type="gene ID" value="Hbut_0785"/>
</dbReference>
<dbReference type="GeneID" id="4782055"/>
<dbReference type="KEGG" id="hbu:Hbut_0785"/>
<dbReference type="eggNOG" id="arCOG00869">
    <property type="taxonomic scope" value="Archaea"/>
</dbReference>
<dbReference type="HOGENOM" id="CLU_1324006_0_0_2"/>
<dbReference type="OrthoDB" id="384139at2157"/>
<dbReference type="Proteomes" id="UP000002593">
    <property type="component" value="Chromosome"/>
</dbReference>
<dbReference type="GO" id="GO:0005886">
    <property type="term" value="C:plasma membrane"/>
    <property type="evidence" value="ECO:0007669"/>
    <property type="project" value="UniProtKB-SubCell"/>
</dbReference>
<dbReference type="GO" id="GO:0033178">
    <property type="term" value="C:proton-transporting two-sector ATPase complex, catalytic domain"/>
    <property type="evidence" value="ECO:0007669"/>
    <property type="project" value="InterPro"/>
</dbReference>
<dbReference type="GO" id="GO:0005524">
    <property type="term" value="F:ATP binding"/>
    <property type="evidence" value="ECO:0007669"/>
    <property type="project" value="UniProtKB-UniRule"/>
</dbReference>
<dbReference type="GO" id="GO:0046933">
    <property type="term" value="F:proton-transporting ATP synthase activity, rotational mechanism"/>
    <property type="evidence" value="ECO:0007669"/>
    <property type="project" value="UniProtKB-UniRule"/>
</dbReference>
<dbReference type="GO" id="GO:0046961">
    <property type="term" value="F:proton-transporting ATPase activity, rotational mechanism"/>
    <property type="evidence" value="ECO:0007669"/>
    <property type="project" value="InterPro"/>
</dbReference>
<dbReference type="GO" id="GO:0042777">
    <property type="term" value="P:proton motive force-driven plasma membrane ATP synthesis"/>
    <property type="evidence" value="ECO:0007669"/>
    <property type="project" value="UniProtKB-UniRule"/>
</dbReference>
<dbReference type="Gene3D" id="3.30.2320.30">
    <property type="entry name" value="ATP synthase, E subunit, C-terminal"/>
    <property type="match status" value="1"/>
</dbReference>
<dbReference type="HAMAP" id="MF_00311">
    <property type="entry name" value="ATP_synth_E_arch"/>
    <property type="match status" value="1"/>
</dbReference>
<dbReference type="InterPro" id="IPR038495">
    <property type="entry name" value="ATPase_E_C"/>
</dbReference>
<dbReference type="InterPro" id="IPR002842">
    <property type="entry name" value="ATPase_V1_Esu"/>
</dbReference>
<dbReference type="Pfam" id="PF01991">
    <property type="entry name" value="vATP-synt_E"/>
    <property type="match status" value="1"/>
</dbReference>
<dbReference type="SUPFAM" id="SSF160527">
    <property type="entry name" value="V-type ATPase subunit E-like"/>
    <property type="match status" value="1"/>
</dbReference>